<dbReference type="EMBL" id="U56901">
    <property type="protein sequence ID" value="AAC44936.1"/>
    <property type="molecule type" value="Genomic_DNA"/>
</dbReference>
<dbReference type="EMBL" id="AL009126">
    <property type="protein sequence ID" value="CAB15568.1"/>
    <property type="molecule type" value="Genomic_DNA"/>
</dbReference>
<dbReference type="EMBL" id="M23558">
    <property type="status" value="NOT_ANNOTATED_CDS"/>
    <property type="molecule type" value="Genomic_DNA"/>
</dbReference>
<dbReference type="PIR" id="A70049">
    <property type="entry name" value="A70049"/>
</dbReference>
<dbReference type="RefSeq" id="NP_391431.1">
    <property type="nucleotide sequence ID" value="NC_000964.3"/>
</dbReference>
<dbReference type="RefSeq" id="WP_003227979.1">
    <property type="nucleotide sequence ID" value="NZ_OZ025638.1"/>
</dbReference>
<dbReference type="SMR" id="P32437"/>
<dbReference type="FunCoup" id="P32437">
    <property type="interactions" value="60"/>
</dbReference>
<dbReference type="STRING" id="224308.BSU35510"/>
<dbReference type="PaxDb" id="224308-BSU35510"/>
<dbReference type="EnsemblBacteria" id="CAB15568">
    <property type="protein sequence ID" value="CAB15568"/>
    <property type="gene ID" value="BSU_35510"/>
</dbReference>
<dbReference type="GeneID" id="936754"/>
<dbReference type="KEGG" id="bsu:BSU35510"/>
<dbReference type="PATRIC" id="fig|224308.179.peg.3842"/>
<dbReference type="eggNOG" id="COG1739">
    <property type="taxonomic scope" value="Bacteria"/>
</dbReference>
<dbReference type="InParanoid" id="P32437"/>
<dbReference type="OrthoDB" id="9813771at2"/>
<dbReference type="PhylomeDB" id="P32437"/>
<dbReference type="BioCyc" id="BSUB:BSU35510-MONOMER"/>
<dbReference type="Proteomes" id="UP000001570">
    <property type="component" value="Chromosome"/>
</dbReference>
<dbReference type="GO" id="GO:0005737">
    <property type="term" value="C:cytoplasm"/>
    <property type="evidence" value="ECO:0000318"/>
    <property type="project" value="GO_Central"/>
</dbReference>
<dbReference type="GO" id="GO:0006446">
    <property type="term" value="P:regulation of translational initiation"/>
    <property type="evidence" value="ECO:0000318"/>
    <property type="project" value="GO_Central"/>
</dbReference>
<dbReference type="Gene3D" id="3.30.230.30">
    <property type="entry name" value="Impact, N-terminal domain"/>
    <property type="match status" value="1"/>
</dbReference>
<dbReference type="InterPro" id="IPR035647">
    <property type="entry name" value="EFG_III/V"/>
</dbReference>
<dbReference type="InterPro" id="IPR023582">
    <property type="entry name" value="Impact"/>
</dbReference>
<dbReference type="InterPro" id="IPR001498">
    <property type="entry name" value="Impact_N"/>
</dbReference>
<dbReference type="InterPro" id="IPR036956">
    <property type="entry name" value="Impact_N_sf"/>
</dbReference>
<dbReference type="InterPro" id="IPR015796">
    <property type="entry name" value="Impact_YigZ-like"/>
</dbReference>
<dbReference type="InterPro" id="IPR020568">
    <property type="entry name" value="Ribosomal_Su5_D2-typ_SF"/>
</dbReference>
<dbReference type="InterPro" id="IPR015269">
    <property type="entry name" value="UPF0029_Impact_C"/>
</dbReference>
<dbReference type="InterPro" id="IPR020569">
    <property type="entry name" value="UPF0029_Impact_CS"/>
</dbReference>
<dbReference type="NCBIfam" id="TIGR00257">
    <property type="entry name" value="IMPACT_YIGZ"/>
    <property type="match status" value="1"/>
</dbReference>
<dbReference type="PANTHER" id="PTHR16301:SF20">
    <property type="entry name" value="IMPACT FAMILY MEMBER YIGZ"/>
    <property type="match status" value="1"/>
</dbReference>
<dbReference type="PANTHER" id="PTHR16301">
    <property type="entry name" value="IMPACT-RELATED"/>
    <property type="match status" value="1"/>
</dbReference>
<dbReference type="Pfam" id="PF09186">
    <property type="entry name" value="DUF1949"/>
    <property type="match status" value="1"/>
</dbReference>
<dbReference type="Pfam" id="PF01205">
    <property type="entry name" value="UPF0029"/>
    <property type="match status" value="1"/>
</dbReference>
<dbReference type="SUPFAM" id="SSF54980">
    <property type="entry name" value="EF-G C-terminal domain-like"/>
    <property type="match status" value="1"/>
</dbReference>
<dbReference type="SUPFAM" id="SSF54211">
    <property type="entry name" value="Ribosomal protein S5 domain 2-like"/>
    <property type="match status" value="1"/>
</dbReference>
<dbReference type="PROSITE" id="PS00910">
    <property type="entry name" value="UPF0029"/>
    <property type="match status" value="1"/>
</dbReference>
<reference key="1">
    <citation type="journal article" date="1996" name="Microbiology">
        <title>Sequence of the 305 degrees-307 degrees region of the Bacillus subtilis chromosome.</title>
        <authorList>
            <person name="Soldo B."/>
            <person name="Lazarevic V."/>
            <person name="Mauel C."/>
            <person name="Karamata D."/>
        </authorList>
    </citation>
    <scope>NUCLEOTIDE SEQUENCE [GENOMIC DNA]</scope>
    <source>
        <strain>168</strain>
    </source>
</reference>
<reference key="2">
    <citation type="journal article" date="1997" name="Nature">
        <title>The complete genome sequence of the Gram-positive bacterium Bacillus subtilis.</title>
        <authorList>
            <person name="Kunst F."/>
            <person name="Ogasawara N."/>
            <person name="Moszer I."/>
            <person name="Albertini A.M."/>
            <person name="Alloni G."/>
            <person name="Azevedo V."/>
            <person name="Bertero M.G."/>
            <person name="Bessieres P."/>
            <person name="Bolotin A."/>
            <person name="Borchert S."/>
            <person name="Borriss R."/>
            <person name="Boursier L."/>
            <person name="Brans A."/>
            <person name="Braun M."/>
            <person name="Brignell S.C."/>
            <person name="Bron S."/>
            <person name="Brouillet S."/>
            <person name="Bruschi C.V."/>
            <person name="Caldwell B."/>
            <person name="Capuano V."/>
            <person name="Carter N.M."/>
            <person name="Choi S.-K."/>
            <person name="Codani J.-J."/>
            <person name="Connerton I.F."/>
            <person name="Cummings N.J."/>
            <person name="Daniel R.A."/>
            <person name="Denizot F."/>
            <person name="Devine K.M."/>
            <person name="Duesterhoeft A."/>
            <person name="Ehrlich S.D."/>
            <person name="Emmerson P.T."/>
            <person name="Entian K.-D."/>
            <person name="Errington J."/>
            <person name="Fabret C."/>
            <person name="Ferrari E."/>
            <person name="Foulger D."/>
            <person name="Fritz C."/>
            <person name="Fujita M."/>
            <person name="Fujita Y."/>
            <person name="Fuma S."/>
            <person name="Galizzi A."/>
            <person name="Galleron N."/>
            <person name="Ghim S.-Y."/>
            <person name="Glaser P."/>
            <person name="Goffeau A."/>
            <person name="Golightly E.J."/>
            <person name="Grandi G."/>
            <person name="Guiseppi G."/>
            <person name="Guy B.J."/>
            <person name="Haga K."/>
            <person name="Haiech J."/>
            <person name="Harwood C.R."/>
            <person name="Henaut A."/>
            <person name="Hilbert H."/>
            <person name="Holsappel S."/>
            <person name="Hosono S."/>
            <person name="Hullo M.-F."/>
            <person name="Itaya M."/>
            <person name="Jones L.-M."/>
            <person name="Joris B."/>
            <person name="Karamata D."/>
            <person name="Kasahara Y."/>
            <person name="Klaerr-Blanchard M."/>
            <person name="Klein C."/>
            <person name="Kobayashi Y."/>
            <person name="Koetter P."/>
            <person name="Koningstein G."/>
            <person name="Krogh S."/>
            <person name="Kumano M."/>
            <person name="Kurita K."/>
            <person name="Lapidus A."/>
            <person name="Lardinois S."/>
            <person name="Lauber J."/>
            <person name="Lazarevic V."/>
            <person name="Lee S.-M."/>
            <person name="Levine A."/>
            <person name="Liu H."/>
            <person name="Masuda S."/>
            <person name="Mauel C."/>
            <person name="Medigue C."/>
            <person name="Medina N."/>
            <person name="Mellado R.P."/>
            <person name="Mizuno M."/>
            <person name="Moestl D."/>
            <person name="Nakai S."/>
            <person name="Noback M."/>
            <person name="Noone D."/>
            <person name="O'Reilly M."/>
            <person name="Ogawa K."/>
            <person name="Ogiwara A."/>
            <person name="Oudega B."/>
            <person name="Park S.-H."/>
            <person name="Parro V."/>
            <person name="Pohl T.M."/>
            <person name="Portetelle D."/>
            <person name="Porwollik S."/>
            <person name="Prescott A.M."/>
            <person name="Presecan E."/>
            <person name="Pujic P."/>
            <person name="Purnelle B."/>
            <person name="Rapoport G."/>
            <person name="Rey M."/>
            <person name="Reynolds S."/>
            <person name="Rieger M."/>
            <person name="Rivolta C."/>
            <person name="Rocha E."/>
            <person name="Roche B."/>
            <person name="Rose M."/>
            <person name="Sadaie Y."/>
            <person name="Sato T."/>
            <person name="Scanlan E."/>
            <person name="Schleich S."/>
            <person name="Schroeter R."/>
            <person name="Scoffone F."/>
            <person name="Sekiguchi J."/>
            <person name="Sekowska A."/>
            <person name="Seror S.J."/>
            <person name="Serror P."/>
            <person name="Shin B.-S."/>
            <person name="Soldo B."/>
            <person name="Sorokin A."/>
            <person name="Tacconi E."/>
            <person name="Takagi T."/>
            <person name="Takahashi H."/>
            <person name="Takemaru K."/>
            <person name="Takeuchi M."/>
            <person name="Tamakoshi A."/>
            <person name="Tanaka T."/>
            <person name="Terpstra P."/>
            <person name="Tognoni A."/>
            <person name="Tosato V."/>
            <person name="Uchiyama S."/>
            <person name="Vandenbol M."/>
            <person name="Vannier F."/>
            <person name="Vassarotti A."/>
            <person name="Viari A."/>
            <person name="Wambutt R."/>
            <person name="Wedler E."/>
            <person name="Wedler H."/>
            <person name="Weitzenegger T."/>
            <person name="Winters P."/>
            <person name="Wipat A."/>
            <person name="Yamamoto H."/>
            <person name="Yamane K."/>
            <person name="Yasumoto K."/>
            <person name="Yata K."/>
            <person name="Yoshida K."/>
            <person name="Yoshikawa H.-F."/>
            <person name="Zumstein E."/>
            <person name="Yoshikawa H."/>
            <person name="Danchin A."/>
        </authorList>
    </citation>
    <scope>NUCLEOTIDE SEQUENCE [LARGE SCALE GENOMIC DNA]</scope>
    <source>
        <strain>168</strain>
    </source>
</reference>
<reference key="3">
    <citation type="journal article" date="1988" name="J. Bacteriol.">
        <title>Localization of Bacillus subtilis sacU(Hy) mutations to two linked genes with similarities to the conserved procaryotic family of two-component signalling systems.</title>
        <authorList>
            <person name="Henner D.J."/>
            <person name="Yang M."/>
            <person name="Ferrari E."/>
        </authorList>
    </citation>
    <scope>NUCLEOTIDE SEQUENCE [GENOMIC DNA] OF 1-171</scope>
</reference>
<reference key="4">
    <citation type="journal article" date="1994" name="EMBO J.">
        <title>Yeast chromosome III: new gene functions.</title>
        <authorList>
            <person name="Koonin E.V."/>
            <person name="Bork P."/>
            <person name="Sander C."/>
        </authorList>
    </citation>
    <scope>SIMILARITY</scope>
</reference>
<feature type="chain" id="PRO_0000207661" description="IMPACT family member YvyE">
    <location>
        <begin position="1"/>
        <end position="217"/>
    </location>
</feature>
<feature type="sequence conflict" description="In Ref. 2." evidence="1" ref="2">
    <original>HYSENVE</original>
    <variation>LIQKMLN</variation>
    <location>
        <begin position="165"/>
        <end position="171"/>
    </location>
</feature>
<keyword id="KW-1185">Reference proteome</keyword>
<comment type="similarity">
    <text evidence="1">Belongs to the IMPACT family.</text>
</comment>
<gene>
    <name type="primary">yvyE</name>
    <name type="synonym">yvhK</name>
    <name type="ordered locus">BSU35510</name>
</gene>
<sequence length="217" mass="24838">MLHSYFTVKEAGEHEIVIEKSRFICHLSRVSTEQEAQEFIQKIKKQHWNATHNCSAYVIGENDHIQKANDDGEPSGTAGVPMLEVLKKRRLKDTCAVVTRYFGGIKLGAGGLIRAYGKSVSEGLNHIGVVERKLMRIMHTSADYTWLGKIENELRESQFLLKEIHYSENVEFETYVEEKETNAFSEWMTELTNGKSDIKEGELTYLEKAVNHIKETE</sequence>
<proteinExistence type="inferred from homology"/>
<protein>
    <recommendedName>
        <fullName>IMPACT family member YvyE</fullName>
    </recommendedName>
</protein>
<accession>P32437</accession>
<accession>P96500</accession>
<name>YVYE_BACSU</name>
<evidence type="ECO:0000305" key="1"/>
<organism>
    <name type="scientific">Bacillus subtilis (strain 168)</name>
    <dbReference type="NCBI Taxonomy" id="224308"/>
    <lineage>
        <taxon>Bacteria</taxon>
        <taxon>Bacillati</taxon>
        <taxon>Bacillota</taxon>
        <taxon>Bacilli</taxon>
        <taxon>Bacillales</taxon>
        <taxon>Bacillaceae</taxon>
        <taxon>Bacillus</taxon>
    </lineage>
</organism>